<keyword id="KW-0929">Antimicrobial</keyword>
<keyword id="KW-0081">Bacteriolytic enzyme</keyword>
<keyword id="KW-0204">Cytolysis</keyword>
<keyword id="KW-0578">Host cell lysis by virus</keyword>
<keyword id="KW-0378">Hydrolase</keyword>
<keyword id="KW-1185">Reference proteome</keyword>
<keyword id="KW-1188">Viral release from host cell</keyword>
<name>ENLYS_BPMD2</name>
<comment type="function">
    <text evidence="1 3">Endolysin that degrades host peptidoglycans and participates with the holin protein in the sequential events which lead to the programmed host cell lysis releasing the mature viral particles. Once the holin has permeabilized the host cell membrane, the endolysin can reach the periplasm and break down the peptidoglycan layer.</text>
</comment>
<comment type="similarity">
    <text evidence="3">Belongs to the L5likevirus endolysin A protein family.</text>
</comment>
<organism>
    <name type="scientific">Mycobacterium phage D29</name>
    <name type="common">Mycobacteriophage D29</name>
    <dbReference type="NCBI Taxonomy" id="28369"/>
    <lineage>
        <taxon>Viruses</taxon>
        <taxon>Duplodnaviria</taxon>
        <taxon>Heunggongvirae</taxon>
        <taxon>Uroviricota</taxon>
        <taxon>Caudoviricetes</taxon>
        <taxon>Fromanvirus</taxon>
    </lineage>
</organism>
<gene>
    <name type="primary">10</name>
</gene>
<organismHost>
    <name type="scientific">Mycobacterium</name>
    <dbReference type="NCBI Taxonomy" id="1763"/>
</organismHost>
<accession>O64203</accession>
<evidence type="ECO:0000269" key="1">
    <source>
    </source>
</evidence>
<evidence type="ECO:0000303" key="2">
    <source>
    </source>
</evidence>
<evidence type="ECO:0000305" key="3"/>
<dbReference type="EC" id="3.-.-.-" evidence="1"/>
<dbReference type="EMBL" id="AF022214">
    <property type="protein sequence ID" value="AAC18450.1"/>
    <property type="molecule type" value="Genomic_DNA"/>
</dbReference>
<dbReference type="PIR" id="G72800">
    <property type="entry name" value="G72800"/>
</dbReference>
<dbReference type="RefSeq" id="NP_046825.1">
    <property type="nucleotide sequence ID" value="NC_001900.1"/>
</dbReference>
<dbReference type="SMR" id="O64203"/>
<dbReference type="CAZy" id="GH19">
    <property type="family name" value="Glycoside Hydrolase Family 19"/>
</dbReference>
<dbReference type="GeneID" id="1261629"/>
<dbReference type="KEGG" id="vg:1261629"/>
<dbReference type="OrthoDB" id="2438at10239"/>
<dbReference type="Proteomes" id="UP000002131">
    <property type="component" value="Segment"/>
</dbReference>
<dbReference type="GO" id="GO:0016787">
    <property type="term" value="F:hydrolase activity"/>
    <property type="evidence" value="ECO:0007669"/>
    <property type="project" value="UniProtKB-KW"/>
</dbReference>
<dbReference type="GO" id="GO:0042742">
    <property type="term" value="P:defense response to bacterium"/>
    <property type="evidence" value="ECO:0007669"/>
    <property type="project" value="UniProtKB-KW"/>
</dbReference>
<dbReference type="GO" id="GO:0044659">
    <property type="term" value="P:viral release from host cell by cytolysis"/>
    <property type="evidence" value="ECO:0000314"/>
    <property type="project" value="UniProtKB"/>
</dbReference>
<dbReference type="Gene3D" id="1.10.530.10">
    <property type="match status" value="1"/>
</dbReference>
<dbReference type="InterPro" id="IPR052354">
    <property type="entry name" value="Cell_Wall_Dynamics_Protein"/>
</dbReference>
<dbReference type="InterPro" id="IPR023346">
    <property type="entry name" value="Lysozyme-like_dom_sf"/>
</dbReference>
<dbReference type="PANTHER" id="PTHR34408">
    <property type="entry name" value="FAMILY PROTEIN, PUTATIVE-RELATED"/>
    <property type="match status" value="1"/>
</dbReference>
<dbReference type="PANTHER" id="PTHR34408:SF1">
    <property type="entry name" value="GLYCOSYL HYDROLASE FAMILY 19 DOMAIN-CONTAINING PROTEIN HI_1415"/>
    <property type="match status" value="1"/>
</dbReference>
<dbReference type="SUPFAM" id="SSF53955">
    <property type="entry name" value="Lysozyme-like"/>
    <property type="match status" value="1"/>
</dbReference>
<reference key="1">
    <citation type="journal article" date="1998" name="J. Mol. Biol.">
        <title>Genome structure of mycobacteriophage D29: implications for phage evolution.</title>
        <authorList>
            <person name="Ford M.E."/>
            <person name="Sarkis G.J."/>
            <person name="Belanger A.E."/>
            <person name="Hendrix R.W."/>
            <person name="Hatfull G.F."/>
        </authorList>
    </citation>
    <scope>NUCLEOTIDE SEQUENCE [LARGE SCALE GENOMIC DNA]</scope>
</reference>
<reference key="2">
    <citation type="journal article" date="2014" name="J. Biol. Chem.">
        <title>Molecular dissection of phage endolysin: an interdomain interaction confers host specificity in Lysin A of Mycobacterium phage D29.</title>
        <authorList>
            <person name="Pohane A.A."/>
            <person name="Joshi H."/>
            <person name="Jain V."/>
        </authorList>
    </citation>
    <scope>FUNCTION</scope>
    <scope>CATALYTIC ACTIVITY</scope>
</reference>
<proteinExistence type="evidence at protein level"/>
<protein>
    <recommendedName>
        <fullName evidence="2">Endolysin A</fullName>
        <ecNumber evidence="1">3.-.-.-</ecNumber>
    </recommendedName>
    <alternativeName>
        <fullName evidence="3">Gene 10 protein</fullName>
    </alternativeName>
    <alternativeName>
        <fullName evidence="3">Gp10</fullName>
    </alternativeName>
    <alternativeName>
        <fullName evidence="3">Lysis protein</fullName>
    </alternativeName>
    <alternativeName>
        <fullName evidence="3">Lysozyme</fullName>
    </alternativeName>
</protein>
<sequence length="493" mass="54822">MTLIVTRDHAQWVHDMCRARAGNRYGYGGAFTLNPRDTTDCSGLVLQTAAWYGGRKDWIGNRYGSTESFRLDHKIVYDLGFRRLPPGGVAALGFTPVMLVGLQHGGGGRYSHTACTLMTMDIPGGPVKVSQRGVDWESRGEVNGVGVFLYDGARAWNDPLFHDFWYLDAKLEDGPTQSVDAAEILARATGLAYNRAVALLPAVRDGLIQADCTNPNRIAMWLAQIGHESDDFKATAEYASGDAYDTRTDLGNTPEVDGDGRLYKGRSWIMITGKDNYRDFSRWAHGRGLVPTPDYFVVHPLELSELRWAGIGAAWYWTVERPDINALSDRRDLETVTRRINGGLTNLDDRRRRYNLALAVGDQLLTLIGDDDELADPTIQRFIREIHGALFNTVVTQSPYGDPQNPDGSEPRSNLWQLHELIKNGDGMGHARYVEESARAGDLRELERVVRAAKGLGRDRSPEFIARARNVLAQIEAANPEYLQAYIARNGAL</sequence>
<feature type="chain" id="PRO_0000164708" description="Endolysin A">
    <location>
        <begin position="1"/>
        <end position="493"/>
    </location>
</feature>